<name>PSBT_PROMA</name>
<reference key="1">
    <citation type="journal article" date="2003" name="Proc. Natl. Acad. Sci. U.S.A.">
        <title>Genome sequence of the cyanobacterium Prochlorococcus marinus SS120, a nearly minimal oxyphototrophic genome.</title>
        <authorList>
            <person name="Dufresne A."/>
            <person name="Salanoubat M."/>
            <person name="Partensky F."/>
            <person name="Artiguenave F."/>
            <person name="Axmann I.M."/>
            <person name="Barbe V."/>
            <person name="Duprat S."/>
            <person name="Galperin M.Y."/>
            <person name="Koonin E.V."/>
            <person name="Le Gall F."/>
            <person name="Makarova K.S."/>
            <person name="Ostrowski M."/>
            <person name="Oztas S."/>
            <person name="Robert C."/>
            <person name="Rogozin I.B."/>
            <person name="Scanlan D.J."/>
            <person name="Tandeau de Marsac N."/>
            <person name="Weissenbach J."/>
            <person name="Wincker P."/>
            <person name="Wolf Y.I."/>
            <person name="Hess W.R."/>
        </authorList>
    </citation>
    <scope>NUCLEOTIDE SEQUENCE [LARGE SCALE GENOMIC DNA]</scope>
    <source>
        <strain>SARG / CCMP1375 / SS120</strain>
    </source>
</reference>
<comment type="function">
    <text evidence="1">Found at the monomer-monomer interface of the photosystem II (PS II) dimer, plays a role in assembly and dimerization of PSII. PSII is a light-driven water plastoquinone oxidoreductase, using light energy to abstract electrons from H(2)O, generating a proton gradient subsequently used for ATP formation.</text>
</comment>
<comment type="subunit">
    <text evidence="2">PSII is composed of 1 copy each of membrane proteins PsbA, PsbB, PsbC, PsbD, PsbE, PsbF, PsbH, PsbI, PsbJ, PsbK, PsbL, PsbM, PsbT, PsbX, PsbY, Psb30/Ycf12, peripheral proteins PsbO, CyanoQ (PsbQ), PsbU, PsbV and a large number of cofactors. It forms dimeric complexes.</text>
</comment>
<comment type="subcellular location">
    <subcellularLocation>
        <location evidence="1">Cellular thylakoid membrane</location>
        <topology evidence="1">Single-pass membrane protein</topology>
    </subcellularLocation>
</comment>
<comment type="similarity">
    <text evidence="1">Belongs to the PsbT family.</text>
</comment>
<proteinExistence type="inferred from homology"/>
<gene>
    <name evidence="1" type="primary">psbT</name>
    <name type="ordered locus">Pro_0353</name>
</gene>
<keyword id="KW-0472">Membrane</keyword>
<keyword id="KW-0602">Photosynthesis</keyword>
<keyword id="KW-0604">Photosystem II</keyword>
<keyword id="KW-1185">Reference proteome</keyword>
<keyword id="KW-0793">Thylakoid</keyword>
<keyword id="KW-0812">Transmembrane</keyword>
<keyword id="KW-1133">Transmembrane helix</keyword>
<protein>
    <recommendedName>
        <fullName evidence="1">Photosystem II reaction center protein T</fullName>
        <shortName evidence="1">PSII-T</shortName>
    </recommendedName>
</protein>
<evidence type="ECO:0000255" key="1">
    <source>
        <dbReference type="HAMAP-Rule" id="MF_00808"/>
    </source>
</evidence>
<evidence type="ECO:0000305" key="2"/>
<dbReference type="EMBL" id="AE017126">
    <property type="protein sequence ID" value="AAP99399.1"/>
    <property type="molecule type" value="Genomic_DNA"/>
</dbReference>
<dbReference type="RefSeq" id="NP_874747.1">
    <property type="nucleotide sequence ID" value="NC_005042.1"/>
</dbReference>
<dbReference type="RefSeq" id="WP_011124508.1">
    <property type="nucleotide sequence ID" value="NC_005042.1"/>
</dbReference>
<dbReference type="SMR" id="Q7VDM3"/>
<dbReference type="STRING" id="167539.Pro_0353"/>
<dbReference type="EnsemblBacteria" id="AAP99399">
    <property type="protein sequence ID" value="AAP99399"/>
    <property type="gene ID" value="Pro_0353"/>
</dbReference>
<dbReference type="KEGG" id="pma:Pro_0353"/>
<dbReference type="PATRIC" id="fig|167539.5.peg.362"/>
<dbReference type="HOGENOM" id="CLU_217078_1_0_3"/>
<dbReference type="OrthoDB" id="427659at2"/>
<dbReference type="Proteomes" id="UP000001420">
    <property type="component" value="Chromosome"/>
</dbReference>
<dbReference type="GO" id="GO:0009539">
    <property type="term" value="C:photosystem II reaction center"/>
    <property type="evidence" value="ECO:0007669"/>
    <property type="project" value="InterPro"/>
</dbReference>
<dbReference type="GO" id="GO:0031676">
    <property type="term" value="C:plasma membrane-derived thylakoid membrane"/>
    <property type="evidence" value="ECO:0007669"/>
    <property type="project" value="UniProtKB-SubCell"/>
</dbReference>
<dbReference type="GO" id="GO:0015979">
    <property type="term" value="P:photosynthesis"/>
    <property type="evidence" value="ECO:0007669"/>
    <property type="project" value="UniProtKB-UniRule"/>
</dbReference>
<dbReference type="HAMAP" id="MF_00808">
    <property type="entry name" value="PSII_PsbT"/>
    <property type="match status" value="1"/>
</dbReference>
<dbReference type="InterPro" id="IPR001743">
    <property type="entry name" value="PSII_PsbT"/>
</dbReference>
<dbReference type="InterPro" id="IPR037268">
    <property type="entry name" value="PSII_PsbT_sf"/>
</dbReference>
<dbReference type="NCBIfam" id="NF008825">
    <property type="entry name" value="PRK11875.1"/>
    <property type="match status" value="1"/>
</dbReference>
<dbReference type="Pfam" id="PF01405">
    <property type="entry name" value="PsbT"/>
    <property type="match status" value="1"/>
</dbReference>
<dbReference type="SUPFAM" id="SSF161029">
    <property type="entry name" value="Photosystem II reaction center protein T, PsbT"/>
    <property type="match status" value="1"/>
</dbReference>
<sequence>MEAFTYTLLMTLGVVTLFFAVAFRDPPKFDK</sequence>
<feature type="chain" id="PRO_0000218001" description="Photosystem II reaction center protein T">
    <location>
        <begin position="1"/>
        <end position="31"/>
    </location>
</feature>
<feature type="transmembrane region" description="Helical" evidence="1">
    <location>
        <begin position="3"/>
        <end position="23"/>
    </location>
</feature>
<organism>
    <name type="scientific">Prochlorococcus marinus (strain SARG / CCMP1375 / SS120)</name>
    <dbReference type="NCBI Taxonomy" id="167539"/>
    <lineage>
        <taxon>Bacteria</taxon>
        <taxon>Bacillati</taxon>
        <taxon>Cyanobacteriota</taxon>
        <taxon>Cyanophyceae</taxon>
        <taxon>Synechococcales</taxon>
        <taxon>Prochlorococcaceae</taxon>
        <taxon>Prochlorococcus</taxon>
    </lineage>
</organism>
<accession>Q7VDM3</accession>